<sequence>MINITTSFPNKTAAAFHKHVTGSEVASAMFPEIAGSIVALFVDGNLQDLATPISKDGSVDPVTIESNTGMDIIRHDAAHIMARAVREIFPDTKLAIGPTIENGFYYDFDLSHSLSEKDFEAIERKMSDIIAKDERFVREVWPRERAIKFFEDLGEHYKLEILSKVPLGEEITVYKHGEFVDLCRGPHAPSARYVKAFKLTKISGAYWLGDQKNKMLQRVYGTAWHSSEALASYIHNMQEAEKRDHRKIAKDLGWFHIQNEALGQVFWHDKGWVIYRIIEEYIRCKLKKHGYLEVKTPIMLDRKLWEKSGHWEKFKENMFVVEDDKKELAIKPMNCPCHVQIFKSKIRSYKELPIRMAEFGMCHRNEPSGSLYGLMRVRGFTQDDAHIFCTHEQVRDEVLRFYELLMEVYKDFGFDSVTVKLSDRPENRIGSDEIWDRSEQSLMEPMNALGVQYTINKGEGAFYGPKLEFTLKDSIGREWQCGTVQLDFVLPDRLGAYYIGEDGKKHIPVIIHRAVLGTIERFIGILIEHYAGNIPAWLAPVQLEILTVSGEVAEYARDLAEMASQENVRVELNAAEENISHKIRKAIFNKVPIVWVVGKSEAGDRCVSVRRYGSGETCRMAAGKALKTLLTCVSMR</sequence>
<comment type="function">
    <text evidence="1">Catalyzes the attachment of threonine to tRNA(Thr) in a two-step reaction: L-threonine is first activated by ATP to form Thr-AMP and then transferred to the acceptor end of tRNA(Thr). Also edits incorrectly charged L-seryl-tRNA(Thr).</text>
</comment>
<comment type="catalytic activity">
    <reaction evidence="1">
        <text>tRNA(Thr) + L-threonine + ATP = L-threonyl-tRNA(Thr) + AMP + diphosphate + H(+)</text>
        <dbReference type="Rhea" id="RHEA:24624"/>
        <dbReference type="Rhea" id="RHEA-COMP:9670"/>
        <dbReference type="Rhea" id="RHEA-COMP:9704"/>
        <dbReference type="ChEBI" id="CHEBI:15378"/>
        <dbReference type="ChEBI" id="CHEBI:30616"/>
        <dbReference type="ChEBI" id="CHEBI:33019"/>
        <dbReference type="ChEBI" id="CHEBI:57926"/>
        <dbReference type="ChEBI" id="CHEBI:78442"/>
        <dbReference type="ChEBI" id="CHEBI:78534"/>
        <dbReference type="ChEBI" id="CHEBI:456215"/>
        <dbReference type="EC" id="6.1.1.3"/>
    </reaction>
</comment>
<comment type="cofactor">
    <cofactor evidence="1">
        <name>Zn(2+)</name>
        <dbReference type="ChEBI" id="CHEBI:29105"/>
    </cofactor>
    <text evidence="1">Binds 1 zinc ion per subunit.</text>
</comment>
<comment type="subunit">
    <text evidence="1">Homodimer.</text>
</comment>
<comment type="subcellular location">
    <subcellularLocation>
        <location evidence="1">Cytoplasm</location>
    </subcellularLocation>
</comment>
<comment type="similarity">
    <text evidence="1">Belongs to the class-II aminoacyl-tRNA synthetase family.</text>
</comment>
<feature type="chain" id="PRO_1000199525" description="Threonine--tRNA ligase">
    <location>
        <begin position="1"/>
        <end position="636"/>
    </location>
</feature>
<feature type="domain" description="TGS" evidence="2">
    <location>
        <begin position="1"/>
        <end position="63"/>
    </location>
</feature>
<feature type="region of interest" description="Catalytic" evidence="1">
    <location>
        <begin position="244"/>
        <end position="535"/>
    </location>
</feature>
<feature type="binding site" evidence="1">
    <location>
        <position position="335"/>
    </location>
    <ligand>
        <name>Zn(2+)</name>
        <dbReference type="ChEBI" id="CHEBI:29105"/>
    </ligand>
</feature>
<feature type="binding site" evidence="1">
    <location>
        <position position="386"/>
    </location>
    <ligand>
        <name>Zn(2+)</name>
        <dbReference type="ChEBI" id="CHEBI:29105"/>
    </ligand>
</feature>
<feature type="binding site" evidence="1">
    <location>
        <position position="512"/>
    </location>
    <ligand>
        <name>Zn(2+)</name>
        <dbReference type="ChEBI" id="CHEBI:29105"/>
    </ligand>
</feature>
<protein>
    <recommendedName>
        <fullName evidence="1">Threonine--tRNA ligase</fullName>
        <ecNumber evidence="1">6.1.1.3</ecNumber>
    </recommendedName>
    <alternativeName>
        <fullName evidence="1">Threonyl-tRNA synthetase</fullName>
        <shortName evidence="1">ThrRS</shortName>
    </alternativeName>
</protein>
<keyword id="KW-0030">Aminoacyl-tRNA synthetase</keyword>
<keyword id="KW-0067">ATP-binding</keyword>
<keyword id="KW-0963">Cytoplasm</keyword>
<keyword id="KW-0436">Ligase</keyword>
<keyword id="KW-0479">Metal-binding</keyword>
<keyword id="KW-0547">Nucleotide-binding</keyword>
<keyword id="KW-0648">Protein biosynthesis</keyword>
<keyword id="KW-1185">Reference proteome</keyword>
<keyword id="KW-0694">RNA-binding</keyword>
<keyword id="KW-0820">tRNA-binding</keyword>
<keyword id="KW-0862">Zinc</keyword>
<gene>
    <name evidence="1" type="primary">thrS</name>
    <name type="ordered locus">AMF_961</name>
</gene>
<reference key="1">
    <citation type="journal article" date="2009" name="BMC Genomics">
        <title>Conservation in the face of diversity: multistrain analysis of an intracellular bacterium.</title>
        <authorList>
            <person name="Dark M.J."/>
            <person name="Herndon D.R."/>
            <person name="Kappmeyer L.S."/>
            <person name="Gonzales M.P."/>
            <person name="Nordeen E."/>
            <person name="Palmer G.H."/>
            <person name="Knowles D.P. Jr."/>
            <person name="Brayton K.A."/>
        </authorList>
    </citation>
    <scope>NUCLEOTIDE SEQUENCE [LARGE SCALE GENOMIC DNA]</scope>
    <source>
        <strain>Florida</strain>
    </source>
</reference>
<name>SYT_ANAMF</name>
<proteinExistence type="inferred from homology"/>
<dbReference type="EC" id="6.1.1.3" evidence="1"/>
<dbReference type="EMBL" id="CP001079">
    <property type="protein sequence ID" value="ACM49780.1"/>
    <property type="molecule type" value="Genomic_DNA"/>
</dbReference>
<dbReference type="RefSeq" id="WP_010268959.1">
    <property type="nucleotide sequence ID" value="NZ_AFMS01000151.1"/>
</dbReference>
<dbReference type="SMR" id="B9KH76"/>
<dbReference type="STRING" id="320483.AMF_961"/>
<dbReference type="GeneID" id="7398549"/>
<dbReference type="KEGG" id="amf:AMF_961"/>
<dbReference type="PATRIC" id="fig|320483.3.peg.1103"/>
<dbReference type="eggNOG" id="COG0441">
    <property type="taxonomic scope" value="Bacteria"/>
</dbReference>
<dbReference type="HOGENOM" id="CLU_008554_0_1_5"/>
<dbReference type="Proteomes" id="UP000007307">
    <property type="component" value="Chromosome"/>
</dbReference>
<dbReference type="GO" id="GO:0005737">
    <property type="term" value="C:cytoplasm"/>
    <property type="evidence" value="ECO:0007669"/>
    <property type="project" value="UniProtKB-SubCell"/>
</dbReference>
<dbReference type="GO" id="GO:0005524">
    <property type="term" value="F:ATP binding"/>
    <property type="evidence" value="ECO:0007669"/>
    <property type="project" value="UniProtKB-UniRule"/>
</dbReference>
<dbReference type="GO" id="GO:0046872">
    <property type="term" value="F:metal ion binding"/>
    <property type="evidence" value="ECO:0007669"/>
    <property type="project" value="UniProtKB-KW"/>
</dbReference>
<dbReference type="GO" id="GO:0004829">
    <property type="term" value="F:threonine-tRNA ligase activity"/>
    <property type="evidence" value="ECO:0007669"/>
    <property type="project" value="UniProtKB-UniRule"/>
</dbReference>
<dbReference type="GO" id="GO:0000049">
    <property type="term" value="F:tRNA binding"/>
    <property type="evidence" value="ECO:0007669"/>
    <property type="project" value="UniProtKB-KW"/>
</dbReference>
<dbReference type="GO" id="GO:0006435">
    <property type="term" value="P:threonyl-tRNA aminoacylation"/>
    <property type="evidence" value="ECO:0007669"/>
    <property type="project" value="UniProtKB-UniRule"/>
</dbReference>
<dbReference type="CDD" id="cd01667">
    <property type="entry name" value="TGS_ThrRS"/>
    <property type="match status" value="1"/>
</dbReference>
<dbReference type="CDD" id="cd00771">
    <property type="entry name" value="ThrRS_core"/>
    <property type="match status" value="1"/>
</dbReference>
<dbReference type="FunFam" id="3.30.54.20:FF:000002">
    <property type="entry name" value="Threonine--tRNA ligase"/>
    <property type="match status" value="1"/>
</dbReference>
<dbReference type="FunFam" id="3.30.930.10:FF:000002">
    <property type="entry name" value="Threonine--tRNA ligase"/>
    <property type="match status" value="1"/>
</dbReference>
<dbReference type="FunFam" id="3.30.980.10:FF:000005">
    <property type="entry name" value="Threonyl-tRNA synthetase, mitochondrial"/>
    <property type="match status" value="1"/>
</dbReference>
<dbReference type="Gene3D" id="3.10.20.30">
    <property type="match status" value="1"/>
</dbReference>
<dbReference type="Gene3D" id="3.30.54.20">
    <property type="match status" value="1"/>
</dbReference>
<dbReference type="Gene3D" id="3.40.50.800">
    <property type="entry name" value="Anticodon-binding domain"/>
    <property type="match status" value="1"/>
</dbReference>
<dbReference type="Gene3D" id="3.30.930.10">
    <property type="entry name" value="Bira Bifunctional Protein, Domain 2"/>
    <property type="match status" value="1"/>
</dbReference>
<dbReference type="Gene3D" id="3.30.980.10">
    <property type="entry name" value="Threonyl-trna Synthetase, Chain A, domain 2"/>
    <property type="match status" value="1"/>
</dbReference>
<dbReference type="HAMAP" id="MF_00184">
    <property type="entry name" value="Thr_tRNA_synth"/>
    <property type="match status" value="1"/>
</dbReference>
<dbReference type="InterPro" id="IPR002314">
    <property type="entry name" value="aa-tRNA-synt_IIb"/>
</dbReference>
<dbReference type="InterPro" id="IPR006195">
    <property type="entry name" value="aa-tRNA-synth_II"/>
</dbReference>
<dbReference type="InterPro" id="IPR045864">
    <property type="entry name" value="aa-tRNA-synth_II/BPL/LPL"/>
</dbReference>
<dbReference type="InterPro" id="IPR004154">
    <property type="entry name" value="Anticodon-bd"/>
</dbReference>
<dbReference type="InterPro" id="IPR036621">
    <property type="entry name" value="Anticodon-bd_dom_sf"/>
</dbReference>
<dbReference type="InterPro" id="IPR012675">
    <property type="entry name" value="Beta-grasp_dom_sf"/>
</dbReference>
<dbReference type="InterPro" id="IPR004095">
    <property type="entry name" value="TGS"/>
</dbReference>
<dbReference type="InterPro" id="IPR012676">
    <property type="entry name" value="TGS-like"/>
</dbReference>
<dbReference type="InterPro" id="IPR002320">
    <property type="entry name" value="Thr-tRNA-ligase_IIa"/>
</dbReference>
<dbReference type="InterPro" id="IPR018163">
    <property type="entry name" value="Thr/Ala-tRNA-synth_IIc_edit"/>
</dbReference>
<dbReference type="InterPro" id="IPR033728">
    <property type="entry name" value="ThrRS_core"/>
</dbReference>
<dbReference type="InterPro" id="IPR012947">
    <property type="entry name" value="tRNA_SAD"/>
</dbReference>
<dbReference type="NCBIfam" id="TIGR00418">
    <property type="entry name" value="thrS"/>
    <property type="match status" value="1"/>
</dbReference>
<dbReference type="PANTHER" id="PTHR11451:SF44">
    <property type="entry name" value="THREONINE--TRNA LIGASE, CHLOROPLASTIC_MITOCHONDRIAL 2"/>
    <property type="match status" value="1"/>
</dbReference>
<dbReference type="PANTHER" id="PTHR11451">
    <property type="entry name" value="THREONINE-TRNA LIGASE"/>
    <property type="match status" value="1"/>
</dbReference>
<dbReference type="Pfam" id="PF03129">
    <property type="entry name" value="HGTP_anticodon"/>
    <property type="match status" value="1"/>
</dbReference>
<dbReference type="Pfam" id="PF00587">
    <property type="entry name" value="tRNA-synt_2b"/>
    <property type="match status" value="1"/>
</dbReference>
<dbReference type="Pfam" id="PF07973">
    <property type="entry name" value="tRNA_SAD"/>
    <property type="match status" value="1"/>
</dbReference>
<dbReference type="PRINTS" id="PR01047">
    <property type="entry name" value="TRNASYNTHTHR"/>
</dbReference>
<dbReference type="SMART" id="SM00863">
    <property type="entry name" value="tRNA_SAD"/>
    <property type="match status" value="1"/>
</dbReference>
<dbReference type="SUPFAM" id="SSF52954">
    <property type="entry name" value="Class II aaRS ABD-related"/>
    <property type="match status" value="1"/>
</dbReference>
<dbReference type="SUPFAM" id="SSF55681">
    <property type="entry name" value="Class II aaRS and biotin synthetases"/>
    <property type="match status" value="1"/>
</dbReference>
<dbReference type="SUPFAM" id="SSF81271">
    <property type="entry name" value="TGS-like"/>
    <property type="match status" value="1"/>
</dbReference>
<dbReference type="SUPFAM" id="SSF55186">
    <property type="entry name" value="ThrRS/AlaRS common domain"/>
    <property type="match status" value="1"/>
</dbReference>
<dbReference type="PROSITE" id="PS50862">
    <property type="entry name" value="AA_TRNA_LIGASE_II"/>
    <property type="match status" value="1"/>
</dbReference>
<dbReference type="PROSITE" id="PS51880">
    <property type="entry name" value="TGS"/>
    <property type="match status" value="1"/>
</dbReference>
<evidence type="ECO:0000255" key="1">
    <source>
        <dbReference type="HAMAP-Rule" id="MF_00184"/>
    </source>
</evidence>
<evidence type="ECO:0000255" key="2">
    <source>
        <dbReference type="PROSITE-ProRule" id="PRU01228"/>
    </source>
</evidence>
<organism>
    <name type="scientific">Anaplasma marginale (strain Florida)</name>
    <dbReference type="NCBI Taxonomy" id="320483"/>
    <lineage>
        <taxon>Bacteria</taxon>
        <taxon>Pseudomonadati</taxon>
        <taxon>Pseudomonadota</taxon>
        <taxon>Alphaproteobacteria</taxon>
        <taxon>Rickettsiales</taxon>
        <taxon>Anaplasmataceae</taxon>
        <taxon>Anaplasma</taxon>
    </lineage>
</organism>
<accession>B9KH76</accession>